<reference key="1">
    <citation type="journal article" date="2003" name="Mol. Biol. Evol.">
        <title>The basic helix-loop-helix transcription factor family in plants: a genome-wide study of protein structure and functional diversity.</title>
        <authorList>
            <person name="Heim M.A."/>
            <person name="Jakoby M."/>
            <person name="Werber M."/>
            <person name="Martin C."/>
            <person name="Weisshaar B."/>
            <person name="Bailey P.C."/>
        </authorList>
    </citation>
    <scope>NUCLEOTIDE SEQUENCE [MRNA]</scope>
    <scope>GENE FAMILY</scope>
    <scope>NOMENCLATURE</scope>
    <source>
        <strain>cv. Columbia</strain>
    </source>
</reference>
<reference key="2">
    <citation type="journal article" date="1999" name="Nature">
        <title>Sequence and analysis of chromosome 4 of the plant Arabidopsis thaliana.</title>
        <authorList>
            <person name="Mayer K.F.X."/>
            <person name="Schueller C."/>
            <person name="Wambutt R."/>
            <person name="Murphy G."/>
            <person name="Volckaert G."/>
            <person name="Pohl T."/>
            <person name="Duesterhoeft A."/>
            <person name="Stiekema W."/>
            <person name="Entian K.-D."/>
            <person name="Terryn N."/>
            <person name="Harris B."/>
            <person name="Ansorge W."/>
            <person name="Brandt P."/>
            <person name="Grivell L.A."/>
            <person name="Rieger M."/>
            <person name="Weichselgartner M."/>
            <person name="de Simone V."/>
            <person name="Obermaier B."/>
            <person name="Mache R."/>
            <person name="Mueller M."/>
            <person name="Kreis M."/>
            <person name="Delseny M."/>
            <person name="Puigdomenech P."/>
            <person name="Watson M."/>
            <person name="Schmidtheini T."/>
            <person name="Reichert B."/>
            <person name="Portetelle D."/>
            <person name="Perez-Alonso M."/>
            <person name="Boutry M."/>
            <person name="Bancroft I."/>
            <person name="Vos P."/>
            <person name="Hoheisel J."/>
            <person name="Zimmermann W."/>
            <person name="Wedler H."/>
            <person name="Ridley P."/>
            <person name="Langham S.-A."/>
            <person name="McCullagh B."/>
            <person name="Bilham L."/>
            <person name="Robben J."/>
            <person name="van der Schueren J."/>
            <person name="Grymonprez B."/>
            <person name="Chuang Y.-J."/>
            <person name="Vandenbussche F."/>
            <person name="Braeken M."/>
            <person name="Weltjens I."/>
            <person name="Voet M."/>
            <person name="Bastiaens I."/>
            <person name="Aert R."/>
            <person name="Defoor E."/>
            <person name="Weitzenegger T."/>
            <person name="Bothe G."/>
            <person name="Ramsperger U."/>
            <person name="Hilbert H."/>
            <person name="Braun M."/>
            <person name="Holzer E."/>
            <person name="Brandt A."/>
            <person name="Peters S."/>
            <person name="van Staveren M."/>
            <person name="Dirkse W."/>
            <person name="Mooijman P."/>
            <person name="Klein Lankhorst R."/>
            <person name="Rose M."/>
            <person name="Hauf J."/>
            <person name="Koetter P."/>
            <person name="Berneiser S."/>
            <person name="Hempel S."/>
            <person name="Feldpausch M."/>
            <person name="Lamberth S."/>
            <person name="Van den Daele H."/>
            <person name="De Keyser A."/>
            <person name="Buysshaert C."/>
            <person name="Gielen J."/>
            <person name="Villarroel R."/>
            <person name="De Clercq R."/>
            <person name="van Montagu M."/>
            <person name="Rogers J."/>
            <person name="Cronin A."/>
            <person name="Quail M.A."/>
            <person name="Bray-Allen S."/>
            <person name="Clark L."/>
            <person name="Doggett J."/>
            <person name="Hall S."/>
            <person name="Kay M."/>
            <person name="Lennard N."/>
            <person name="McLay K."/>
            <person name="Mayes R."/>
            <person name="Pettett A."/>
            <person name="Rajandream M.A."/>
            <person name="Lyne M."/>
            <person name="Benes V."/>
            <person name="Rechmann S."/>
            <person name="Borkova D."/>
            <person name="Bloecker H."/>
            <person name="Scharfe M."/>
            <person name="Grimm M."/>
            <person name="Loehnert T.-H."/>
            <person name="Dose S."/>
            <person name="de Haan M."/>
            <person name="Maarse A.C."/>
            <person name="Schaefer M."/>
            <person name="Mueller-Auer S."/>
            <person name="Gabel C."/>
            <person name="Fuchs M."/>
            <person name="Fartmann B."/>
            <person name="Granderath K."/>
            <person name="Dauner D."/>
            <person name="Herzl A."/>
            <person name="Neumann S."/>
            <person name="Argiriou A."/>
            <person name="Vitale D."/>
            <person name="Liguori R."/>
            <person name="Piravandi E."/>
            <person name="Massenet O."/>
            <person name="Quigley F."/>
            <person name="Clabauld G."/>
            <person name="Muendlein A."/>
            <person name="Felber R."/>
            <person name="Schnabl S."/>
            <person name="Hiller R."/>
            <person name="Schmidt W."/>
            <person name="Lecharny A."/>
            <person name="Aubourg S."/>
            <person name="Chefdor F."/>
            <person name="Cooke R."/>
            <person name="Berger C."/>
            <person name="Monfort A."/>
            <person name="Casacuberta E."/>
            <person name="Gibbons T."/>
            <person name="Weber N."/>
            <person name="Vandenbol M."/>
            <person name="Bargues M."/>
            <person name="Terol J."/>
            <person name="Torres A."/>
            <person name="Perez-Perez A."/>
            <person name="Purnelle B."/>
            <person name="Bent E."/>
            <person name="Johnson S."/>
            <person name="Tacon D."/>
            <person name="Jesse T."/>
            <person name="Heijnen L."/>
            <person name="Schwarz S."/>
            <person name="Scholler P."/>
            <person name="Heber S."/>
            <person name="Francs P."/>
            <person name="Bielke C."/>
            <person name="Frishman D."/>
            <person name="Haase D."/>
            <person name="Lemcke K."/>
            <person name="Mewes H.-W."/>
            <person name="Stocker S."/>
            <person name="Zaccaria P."/>
            <person name="Bevan M."/>
            <person name="Wilson R.K."/>
            <person name="de la Bastide M."/>
            <person name="Habermann K."/>
            <person name="Parnell L."/>
            <person name="Dedhia N."/>
            <person name="Gnoj L."/>
            <person name="Schutz K."/>
            <person name="Huang E."/>
            <person name="Spiegel L."/>
            <person name="Sekhon M."/>
            <person name="Murray J."/>
            <person name="Sheet P."/>
            <person name="Cordes M."/>
            <person name="Abu-Threideh J."/>
            <person name="Stoneking T."/>
            <person name="Kalicki J."/>
            <person name="Graves T."/>
            <person name="Harmon G."/>
            <person name="Edwards J."/>
            <person name="Latreille P."/>
            <person name="Courtney L."/>
            <person name="Cloud J."/>
            <person name="Abbott A."/>
            <person name="Scott K."/>
            <person name="Johnson D."/>
            <person name="Minx P."/>
            <person name="Bentley D."/>
            <person name="Fulton B."/>
            <person name="Miller N."/>
            <person name="Greco T."/>
            <person name="Kemp K."/>
            <person name="Kramer J."/>
            <person name="Fulton L."/>
            <person name="Mardis E."/>
            <person name="Dante M."/>
            <person name="Pepin K."/>
            <person name="Hillier L.W."/>
            <person name="Nelson J."/>
            <person name="Spieth J."/>
            <person name="Ryan E."/>
            <person name="Andrews S."/>
            <person name="Geisel C."/>
            <person name="Layman D."/>
            <person name="Du H."/>
            <person name="Ali J."/>
            <person name="Berghoff A."/>
            <person name="Jones K."/>
            <person name="Drone K."/>
            <person name="Cotton M."/>
            <person name="Joshu C."/>
            <person name="Antonoiu B."/>
            <person name="Zidanic M."/>
            <person name="Strong C."/>
            <person name="Sun H."/>
            <person name="Lamar B."/>
            <person name="Yordan C."/>
            <person name="Ma P."/>
            <person name="Zhong J."/>
            <person name="Preston R."/>
            <person name="Vil D."/>
            <person name="Shekher M."/>
            <person name="Matero A."/>
            <person name="Shah R."/>
            <person name="Swaby I.K."/>
            <person name="O'Shaughnessy A."/>
            <person name="Rodriguez M."/>
            <person name="Hoffman J."/>
            <person name="Till S."/>
            <person name="Granat S."/>
            <person name="Shohdy N."/>
            <person name="Hasegawa A."/>
            <person name="Hameed A."/>
            <person name="Lodhi M."/>
            <person name="Johnson A."/>
            <person name="Chen E."/>
            <person name="Marra M.A."/>
            <person name="Martienssen R."/>
            <person name="McCombie W.R."/>
        </authorList>
    </citation>
    <scope>NUCLEOTIDE SEQUENCE [LARGE SCALE GENOMIC DNA]</scope>
    <source>
        <strain>cv. Columbia</strain>
    </source>
</reference>
<reference key="3">
    <citation type="journal article" date="2017" name="Plant J.">
        <title>Araport11: a complete reannotation of the Arabidopsis thaliana reference genome.</title>
        <authorList>
            <person name="Cheng C.Y."/>
            <person name="Krishnakumar V."/>
            <person name="Chan A.P."/>
            <person name="Thibaud-Nissen F."/>
            <person name="Schobel S."/>
            <person name="Town C.D."/>
        </authorList>
    </citation>
    <scope>GENOME REANNOTATION</scope>
    <source>
        <strain>cv. Columbia</strain>
    </source>
</reference>
<evidence type="ECO:0000255" key="1">
    <source>
        <dbReference type="PROSITE-ProRule" id="PRU00981"/>
    </source>
</evidence>
<evidence type="ECO:0000256" key="2">
    <source>
        <dbReference type="SAM" id="MobiDB-lite"/>
    </source>
</evidence>
<evidence type="ECO:0000305" key="3"/>
<sequence length="307" mass="34589">MMIISSQILLLFGFKLFFETRGEDDIVELLCKIGQTQIPSSDPLPILRGSGSGGREENTPLPPPLPHQNLFIQEDEMSSWPHHPLRQDYLCSELYASTPAPHPQSSVSLAPPPPKPPSSAPYGQIIAPRSAPRIQGTEEARGSTSRKRSRAAEMHNLAERRRREKINERMKTLQQLIPRCNKSTKVSMLEDVIEYVKSLEMQINQFMPHMAMGMNQPPAYIPFPSQAHMAGVGPSYPPPRYPFPNIQTFDPSRVWLQSPQPNPVSNQPQMNPYGQFVGHHQMQQSLPPPLQVILSQYPLCLFLCSNK</sequence>
<name>BH127_ARATH</name>
<protein>
    <recommendedName>
        <fullName>Transcription factor bHLH127</fullName>
    </recommendedName>
    <alternativeName>
        <fullName>Basic helix-loop-helix protein 127</fullName>
        <shortName>AtbHLH127</shortName>
        <shortName>bHLH 127</shortName>
    </alternativeName>
    <alternativeName>
        <fullName>bHLH transcription factor bHLH127</fullName>
    </alternativeName>
</protein>
<organism>
    <name type="scientific">Arabidopsis thaliana</name>
    <name type="common">Mouse-ear cress</name>
    <dbReference type="NCBI Taxonomy" id="3702"/>
    <lineage>
        <taxon>Eukaryota</taxon>
        <taxon>Viridiplantae</taxon>
        <taxon>Streptophyta</taxon>
        <taxon>Embryophyta</taxon>
        <taxon>Tracheophyta</taxon>
        <taxon>Spermatophyta</taxon>
        <taxon>Magnoliopsida</taxon>
        <taxon>eudicotyledons</taxon>
        <taxon>Gunneridae</taxon>
        <taxon>Pentapetalae</taxon>
        <taxon>rosids</taxon>
        <taxon>malvids</taxon>
        <taxon>Brassicales</taxon>
        <taxon>Brassicaceae</taxon>
        <taxon>Camelineae</taxon>
        <taxon>Arabidopsis</taxon>
    </lineage>
</organism>
<keyword id="KW-0238">DNA-binding</keyword>
<keyword id="KW-0539">Nucleus</keyword>
<keyword id="KW-1185">Reference proteome</keyword>
<keyword id="KW-0804">Transcription</keyword>
<keyword id="KW-0805">Transcription regulation</keyword>
<gene>
    <name type="primary">BHLH127</name>
    <name type="ordered locus">At4g28815</name>
    <name type="ORF">F16A16.80</name>
</gene>
<proteinExistence type="evidence at transcript level"/>
<accession>Q7XHI7</accession>
<accession>Q9SVU8</accession>
<dbReference type="EMBL" id="AJ577586">
    <property type="protein sequence ID" value="CAE12173.1"/>
    <property type="molecule type" value="mRNA"/>
</dbReference>
<dbReference type="EMBL" id="AL035353">
    <property type="protein sequence ID" value="CAA22971.1"/>
    <property type="status" value="ALT_SEQ"/>
    <property type="molecule type" value="Genomic_DNA"/>
</dbReference>
<dbReference type="EMBL" id="AL161573">
    <property type="protein sequence ID" value="CAB81469.1"/>
    <property type="status" value="ALT_SEQ"/>
    <property type="molecule type" value="Genomic_DNA"/>
</dbReference>
<dbReference type="EMBL" id="CP002687">
    <property type="protein sequence ID" value="AEE85548.1"/>
    <property type="molecule type" value="Genomic_DNA"/>
</dbReference>
<dbReference type="PIR" id="H85335">
    <property type="entry name" value="H85335"/>
</dbReference>
<dbReference type="PIR" id="T04518">
    <property type="entry name" value="T04518"/>
</dbReference>
<dbReference type="RefSeq" id="NP_001078463.1">
    <property type="nucleotide sequence ID" value="NM_001084994.2"/>
</dbReference>
<dbReference type="SMR" id="Q7XHI7"/>
<dbReference type="FunCoup" id="Q7XHI7">
    <property type="interactions" value="13"/>
</dbReference>
<dbReference type="STRING" id="3702.Q7XHI7"/>
<dbReference type="PaxDb" id="3702-AT4G28815.1"/>
<dbReference type="EnsemblPlants" id="AT4G28815.1">
    <property type="protein sequence ID" value="AT4G28815.1"/>
    <property type="gene ID" value="AT4G28815"/>
</dbReference>
<dbReference type="GeneID" id="5008171"/>
<dbReference type="Gramene" id="AT4G28815.1">
    <property type="protein sequence ID" value="AT4G28815.1"/>
    <property type="gene ID" value="AT4G28815"/>
</dbReference>
<dbReference type="KEGG" id="ath:AT4G28815"/>
<dbReference type="Araport" id="AT4G28815"/>
<dbReference type="TAIR" id="AT4G28815"/>
<dbReference type="eggNOG" id="ENOG502QR6A">
    <property type="taxonomic scope" value="Eukaryota"/>
</dbReference>
<dbReference type="HOGENOM" id="CLU_907177_0_0_1"/>
<dbReference type="InParanoid" id="Q7XHI7"/>
<dbReference type="PhylomeDB" id="Q7XHI7"/>
<dbReference type="PRO" id="PR:Q7XHI7"/>
<dbReference type="Proteomes" id="UP000006548">
    <property type="component" value="Chromosome 4"/>
</dbReference>
<dbReference type="ExpressionAtlas" id="Q7XHI7">
    <property type="expression patterns" value="baseline and differential"/>
</dbReference>
<dbReference type="GO" id="GO:0005634">
    <property type="term" value="C:nucleus"/>
    <property type="evidence" value="ECO:0007669"/>
    <property type="project" value="UniProtKB-SubCell"/>
</dbReference>
<dbReference type="GO" id="GO:0003677">
    <property type="term" value="F:DNA binding"/>
    <property type="evidence" value="ECO:0007669"/>
    <property type="project" value="UniProtKB-KW"/>
</dbReference>
<dbReference type="GO" id="GO:0046983">
    <property type="term" value="F:protein dimerization activity"/>
    <property type="evidence" value="ECO:0007669"/>
    <property type="project" value="InterPro"/>
</dbReference>
<dbReference type="CDD" id="cd11445">
    <property type="entry name" value="bHLH_AtPIF_like"/>
    <property type="match status" value="1"/>
</dbReference>
<dbReference type="Gene3D" id="4.10.280.10">
    <property type="entry name" value="Helix-loop-helix DNA-binding domain"/>
    <property type="match status" value="1"/>
</dbReference>
<dbReference type="InterPro" id="IPR031066">
    <property type="entry name" value="bHLH_ALC-like_plant"/>
</dbReference>
<dbReference type="InterPro" id="IPR011598">
    <property type="entry name" value="bHLH_dom"/>
</dbReference>
<dbReference type="InterPro" id="IPR036638">
    <property type="entry name" value="HLH_DNA-bd_sf"/>
</dbReference>
<dbReference type="InterPro" id="IPR047265">
    <property type="entry name" value="PIF1-like_bHLH"/>
</dbReference>
<dbReference type="PANTHER" id="PTHR45855:SF21">
    <property type="entry name" value="TRANSCRIPTION FACTOR BHLH119-RELATED"/>
    <property type="match status" value="1"/>
</dbReference>
<dbReference type="PANTHER" id="PTHR45855">
    <property type="entry name" value="TRANSCRIPTION FACTOR PIF1-RELATED"/>
    <property type="match status" value="1"/>
</dbReference>
<dbReference type="Pfam" id="PF00010">
    <property type="entry name" value="HLH"/>
    <property type="match status" value="1"/>
</dbReference>
<dbReference type="SMART" id="SM00353">
    <property type="entry name" value="HLH"/>
    <property type="match status" value="1"/>
</dbReference>
<dbReference type="SUPFAM" id="SSF47459">
    <property type="entry name" value="HLH, helix-loop-helix DNA-binding domain"/>
    <property type="match status" value="1"/>
</dbReference>
<dbReference type="PROSITE" id="PS50888">
    <property type="entry name" value="BHLH"/>
    <property type="match status" value="1"/>
</dbReference>
<feature type="chain" id="PRO_0000358811" description="Transcription factor bHLH127">
    <location>
        <begin position="1"/>
        <end position="307"/>
    </location>
</feature>
<feature type="domain" description="bHLH" evidence="1">
    <location>
        <begin position="150"/>
        <end position="199"/>
    </location>
</feature>
<feature type="region of interest" description="Disordered" evidence="2">
    <location>
        <begin position="41"/>
        <end position="68"/>
    </location>
</feature>
<feature type="region of interest" description="Disordered" evidence="2">
    <location>
        <begin position="101"/>
        <end position="155"/>
    </location>
</feature>
<feature type="compositionally biased region" description="Pro residues" evidence="2">
    <location>
        <begin position="110"/>
        <end position="119"/>
    </location>
</feature>
<comment type="subunit">
    <text evidence="3">Homodimer.</text>
</comment>
<comment type="subcellular location">
    <subcellularLocation>
        <location evidence="1">Nucleus</location>
    </subcellularLocation>
</comment>
<comment type="similarity">
    <text evidence="3">Belongs to the bHLH protein family.</text>
</comment>
<comment type="sequence caution" evidence="3">
    <conflict type="erroneous gene model prediction">
        <sequence resource="EMBL-CDS" id="CAA22971"/>
    </conflict>
    <text>The predicted gene At4g28810 has been split into 2 genes: At4g28811 and At4g28815.</text>
</comment>
<comment type="sequence caution" evidence="3">
    <conflict type="erroneous gene model prediction">
        <sequence resource="EMBL-CDS" id="CAB81469"/>
    </conflict>
    <text>The predicted gene At4g28810 has been split into 2 genes: At4g28811 and At4g28815.</text>
</comment>